<dbReference type="EMBL" id="EU254477">
    <property type="protein sequence ID" value="ABY79728.1"/>
    <property type="molecule type" value="Genomic_DNA"/>
</dbReference>
<dbReference type="RefSeq" id="YP_001936513.1">
    <property type="nucleotide sequence ID" value="NC_010776.1"/>
</dbReference>
<dbReference type="SMR" id="B2XWK1"/>
<dbReference type="GeneID" id="6335946"/>
<dbReference type="GO" id="GO:0009535">
    <property type="term" value="C:chloroplast thylakoid membrane"/>
    <property type="evidence" value="ECO:0007669"/>
    <property type="project" value="UniProtKB-SubCell"/>
</dbReference>
<dbReference type="GO" id="GO:0009523">
    <property type="term" value="C:photosystem II"/>
    <property type="evidence" value="ECO:0007669"/>
    <property type="project" value="UniProtKB-KW"/>
</dbReference>
<dbReference type="GO" id="GO:0016168">
    <property type="term" value="F:chlorophyll binding"/>
    <property type="evidence" value="ECO:0007669"/>
    <property type="project" value="UniProtKB-UniRule"/>
</dbReference>
<dbReference type="GO" id="GO:0045156">
    <property type="term" value="F:electron transporter, transferring electrons within the cyclic electron transport pathway of photosynthesis activity"/>
    <property type="evidence" value="ECO:0007669"/>
    <property type="project" value="InterPro"/>
</dbReference>
<dbReference type="GO" id="GO:0046872">
    <property type="term" value="F:metal ion binding"/>
    <property type="evidence" value="ECO:0007669"/>
    <property type="project" value="UniProtKB-KW"/>
</dbReference>
<dbReference type="GO" id="GO:0009772">
    <property type="term" value="P:photosynthetic electron transport in photosystem II"/>
    <property type="evidence" value="ECO:0007669"/>
    <property type="project" value="InterPro"/>
</dbReference>
<dbReference type="FunFam" id="1.10.10.670:FF:000001">
    <property type="entry name" value="Photosystem II CP43 reaction center protein"/>
    <property type="match status" value="1"/>
</dbReference>
<dbReference type="Gene3D" id="1.10.10.670">
    <property type="entry name" value="photosystem ii from thermosynechococcus elongatus"/>
    <property type="match status" value="1"/>
</dbReference>
<dbReference type="HAMAP" id="MF_01496">
    <property type="entry name" value="PSII_PsbC_CP43"/>
    <property type="match status" value="1"/>
</dbReference>
<dbReference type="InterPro" id="IPR000932">
    <property type="entry name" value="PS_antenna-like"/>
</dbReference>
<dbReference type="InterPro" id="IPR036001">
    <property type="entry name" value="PS_II_antenna-like_sf"/>
</dbReference>
<dbReference type="InterPro" id="IPR005869">
    <property type="entry name" value="PSII_PsbC"/>
</dbReference>
<dbReference type="InterPro" id="IPR044900">
    <property type="entry name" value="PSII_PsbC_sf"/>
</dbReference>
<dbReference type="NCBIfam" id="TIGR01153">
    <property type="entry name" value="psbC"/>
    <property type="match status" value="1"/>
</dbReference>
<dbReference type="Pfam" id="PF00421">
    <property type="entry name" value="PSII"/>
    <property type="match status" value="1"/>
</dbReference>
<dbReference type="SUPFAM" id="SSF161077">
    <property type="entry name" value="Photosystem II antenna protein-like"/>
    <property type="match status" value="1"/>
</dbReference>
<gene>
    <name evidence="1" type="primary">psbC</name>
</gene>
<organism>
    <name type="scientific">Fagopyrum esculentum subsp. ancestrale</name>
    <name type="common">Wild buckwheat</name>
    <dbReference type="NCBI Taxonomy" id="180217"/>
    <lineage>
        <taxon>Eukaryota</taxon>
        <taxon>Viridiplantae</taxon>
        <taxon>Streptophyta</taxon>
        <taxon>Embryophyta</taxon>
        <taxon>Tracheophyta</taxon>
        <taxon>Spermatophyta</taxon>
        <taxon>Magnoliopsida</taxon>
        <taxon>eudicotyledons</taxon>
        <taxon>Gunneridae</taxon>
        <taxon>Pentapetalae</taxon>
        <taxon>Caryophyllales</taxon>
        <taxon>Polygonaceae</taxon>
        <taxon>Polygonoideae</taxon>
        <taxon>Fagopyreae</taxon>
        <taxon>Fagopyrum</taxon>
    </lineage>
</organism>
<reference key="1">
    <citation type="journal article" date="2008" name="BMC Plant Biol.">
        <title>Comparative chloroplast genomics and phylogenetics of Fagopyrum esculentum ssp. ancestrale - a wild ancestor of cultivated buckwheat.</title>
        <authorList>
            <person name="Logacheva M.D."/>
            <person name="Samigullin T.H."/>
            <person name="Dhingra A."/>
            <person name="Penin A.A."/>
        </authorList>
    </citation>
    <scope>NUCLEOTIDE SEQUENCE [LARGE SCALE GENOMIC DNA]</scope>
</reference>
<name>PSBC_FAGEA</name>
<comment type="function">
    <text evidence="1">One of the components of the core complex of photosystem II (PSII). It binds chlorophyll and helps catalyze the primary light-induced photochemical processes of PSII. PSII is a light-driven water:plastoquinone oxidoreductase, using light energy to abstract electrons from H(2)O, generating O(2) and a proton gradient subsequently used for ATP formation.</text>
</comment>
<comment type="cofactor">
    <text evidence="1">Binds multiple chlorophylls and provides some of the ligands for the Ca-4Mn-5O cluster of the oxygen-evolving complex. It may also provide a ligand for a Cl- that is required for oxygen evolution. PSII binds additional chlorophylls, carotenoids and specific lipids.</text>
</comment>
<comment type="subunit">
    <text evidence="1">PSII is composed of 1 copy each of membrane proteins PsbA, PsbB, PsbC, PsbD, PsbE, PsbF, PsbH, PsbI, PsbJ, PsbK, PsbL, PsbM, PsbT, PsbX, PsbY, PsbZ, Psb30/Ycf12, at least 3 peripheral proteins of the oxygen-evolving complex and a large number of cofactors. It forms dimeric complexes.</text>
</comment>
<comment type="subcellular location">
    <subcellularLocation>
        <location evidence="1">Plastid</location>
        <location evidence="1">Chloroplast thylakoid membrane</location>
        <topology evidence="1">Multi-pass membrane protein</topology>
    </subcellularLocation>
</comment>
<comment type="similarity">
    <text evidence="1">Belongs to the PsbB/PsbC family. PsbC subfamily.</text>
</comment>
<keyword id="KW-0007">Acetylation</keyword>
<keyword id="KW-0148">Chlorophyll</keyword>
<keyword id="KW-0150">Chloroplast</keyword>
<keyword id="KW-0157">Chromophore</keyword>
<keyword id="KW-0464">Manganese</keyword>
<keyword id="KW-0472">Membrane</keyword>
<keyword id="KW-0479">Metal-binding</keyword>
<keyword id="KW-0597">Phosphoprotein</keyword>
<keyword id="KW-0602">Photosynthesis</keyword>
<keyword id="KW-0604">Photosystem II</keyword>
<keyword id="KW-0934">Plastid</keyword>
<keyword id="KW-0793">Thylakoid</keyword>
<keyword id="KW-0812">Transmembrane</keyword>
<keyword id="KW-1133">Transmembrane helix</keyword>
<evidence type="ECO:0000255" key="1">
    <source>
        <dbReference type="HAMAP-Rule" id="MF_01496"/>
    </source>
</evidence>
<feature type="propeptide" id="PRO_0000431144" evidence="1">
    <location>
        <begin position="1"/>
        <end position="14"/>
    </location>
</feature>
<feature type="chain" id="PRO_0000361382" description="Photosystem II CP43 reaction center protein" evidence="1">
    <location>
        <begin position="15"/>
        <end position="473"/>
    </location>
</feature>
<feature type="transmembrane region" description="Helical" evidence="1">
    <location>
        <begin position="69"/>
        <end position="93"/>
    </location>
</feature>
<feature type="transmembrane region" description="Helical" evidence="1">
    <location>
        <begin position="134"/>
        <end position="155"/>
    </location>
</feature>
<feature type="transmembrane region" description="Helical" evidence="1">
    <location>
        <begin position="178"/>
        <end position="200"/>
    </location>
</feature>
<feature type="transmembrane region" description="Helical" evidence="1">
    <location>
        <begin position="255"/>
        <end position="275"/>
    </location>
</feature>
<feature type="transmembrane region" description="Helical" evidence="1">
    <location>
        <begin position="291"/>
        <end position="312"/>
    </location>
</feature>
<feature type="transmembrane region" description="Helical" evidence="1">
    <location>
        <begin position="447"/>
        <end position="471"/>
    </location>
</feature>
<feature type="binding site" evidence="1">
    <location>
        <position position="367"/>
    </location>
    <ligand>
        <name>[CaMn4O5] cluster</name>
        <dbReference type="ChEBI" id="CHEBI:189552"/>
    </ligand>
</feature>
<feature type="modified residue" description="N-acetylthreonine" evidence="1">
    <location>
        <position position="15"/>
    </location>
</feature>
<feature type="modified residue" description="Phosphothreonine" evidence="1">
    <location>
        <position position="15"/>
    </location>
</feature>
<sequence>MKTLYSLRRFYHVETLFNGTLALTSRDQETTGFAWWAGNARLINLSGKLLGAHVAHAGLIVFWAGAMNLFEVAHFVPEKPMYEQGLILLPHLATLGWGVGPGGEVIDTFPYFVSGVLHLISSAVLGFGGIYHALLGPETLEESFPFFGYVWKDRNKMTTILGIHLILLGLGAFLLVFKALFFGGIYDTWAPGGGDVRKITNLTLSPSIIFGYLLKSPFGGEGWIVSVDDLEDIIGGHVWLGSICILGGIWHILTKPFAWARRALVWSGEAYLSYSLGALSVFGFIACCFVWFNNTAYPSEFYGPTGPEASQAQAFTFLVRDQRLGANVGSAQGPTGLGKYLMRSPTGEVIFGGETMRFWDLRAPWLEPLRGPNGLDLSRLKKDIQPWQERRSAEYMTHAPLGSLNSVGGVATEINAVNYVSPRSWLATSHFVLGFFLFVGHLWHAGRARAAAAGFEKGIDRDFEPVLSMTPLN</sequence>
<protein>
    <recommendedName>
        <fullName evidence="1">Photosystem II CP43 reaction center protein</fullName>
    </recommendedName>
    <alternativeName>
        <fullName evidence="1">PSII 43 kDa protein</fullName>
    </alternativeName>
    <alternativeName>
        <fullName evidence="1">Protein CP-43</fullName>
    </alternativeName>
</protein>
<accession>B2XWK1</accession>
<proteinExistence type="inferred from homology"/>
<geneLocation type="chloroplast"/>